<evidence type="ECO:0000255" key="1">
    <source>
        <dbReference type="HAMAP-Rule" id="MF_00392"/>
    </source>
</evidence>
<proteinExistence type="inferred from homology"/>
<reference key="1">
    <citation type="submission" date="2009-01" db="EMBL/GenBank/DDBJ databases">
        <title>Complete sequence of Anaeromyxobacter dehalogenans 2CP-1.</title>
        <authorList>
            <person name="Lucas S."/>
            <person name="Copeland A."/>
            <person name="Lapidus A."/>
            <person name="Glavina del Rio T."/>
            <person name="Dalin E."/>
            <person name="Tice H."/>
            <person name="Bruce D."/>
            <person name="Goodwin L."/>
            <person name="Pitluck S."/>
            <person name="Saunders E."/>
            <person name="Brettin T."/>
            <person name="Detter J.C."/>
            <person name="Han C."/>
            <person name="Larimer F."/>
            <person name="Land M."/>
            <person name="Hauser L."/>
            <person name="Kyrpides N."/>
            <person name="Ovchinnikova G."/>
            <person name="Beliaev A.S."/>
            <person name="Richardson P."/>
        </authorList>
    </citation>
    <scope>NUCLEOTIDE SEQUENCE [LARGE SCALE GENOMIC DNA]</scope>
    <source>
        <strain>2CP-1 / ATCC BAA-258</strain>
    </source>
</reference>
<dbReference type="EC" id="2.4.1.182" evidence="1"/>
<dbReference type="EMBL" id="CP001359">
    <property type="protein sequence ID" value="ACL66143.1"/>
    <property type="molecule type" value="Genomic_DNA"/>
</dbReference>
<dbReference type="RefSeq" id="WP_012633900.1">
    <property type="nucleotide sequence ID" value="NC_011891.1"/>
</dbReference>
<dbReference type="SMR" id="B8JE78"/>
<dbReference type="CAZy" id="GT19">
    <property type="family name" value="Glycosyltransferase Family 19"/>
</dbReference>
<dbReference type="KEGG" id="acp:A2cp1_2806"/>
<dbReference type="HOGENOM" id="CLU_036577_3_0_7"/>
<dbReference type="UniPathway" id="UPA00973"/>
<dbReference type="Proteomes" id="UP000007089">
    <property type="component" value="Chromosome"/>
</dbReference>
<dbReference type="GO" id="GO:0016020">
    <property type="term" value="C:membrane"/>
    <property type="evidence" value="ECO:0007669"/>
    <property type="project" value="GOC"/>
</dbReference>
<dbReference type="GO" id="GO:0008915">
    <property type="term" value="F:lipid-A-disaccharide synthase activity"/>
    <property type="evidence" value="ECO:0007669"/>
    <property type="project" value="UniProtKB-UniRule"/>
</dbReference>
<dbReference type="GO" id="GO:0005543">
    <property type="term" value="F:phospholipid binding"/>
    <property type="evidence" value="ECO:0007669"/>
    <property type="project" value="TreeGrafter"/>
</dbReference>
<dbReference type="GO" id="GO:0009245">
    <property type="term" value="P:lipid A biosynthetic process"/>
    <property type="evidence" value="ECO:0007669"/>
    <property type="project" value="UniProtKB-UniRule"/>
</dbReference>
<dbReference type="Gene3D" id="3.40.50.2000">
    <property type="entry name" value="Glycogen Phosphorylase B"/>
    <property type="match status" value="1"/>
</dbReference>
<dbReference type="HAMAP" id="MF_00392">
    <property type="entry name" value="LpxB"/>
    <property type="match status" value="1"/>
</dbReference>
<dbReference type="InterPro" id="IPR003835">
    <property type="entry name" value="Glyco_trans_19"/>
</dbReference>
<dbReference type="NCBIfam" id="TIGR00215">
    <property type="entry name" value="lpxB"/>
    <property type="match status" value="1"/>
</dbReference>
<dbReference type="PANTHER" id="PTHR30372">
    <property type="entry name" value="LIPID-A-DISACCHARIDE SYNTHASE"/>
    <property type="match status" value="1"/>
</dbReference>
<dbReference type="PANTHER" id="PTHR30372:SF4">
    <property type="entry name" value="LIPID-A-DISACCHARIDE SYNTHASE, MITOCHONDRIAL-RELATED"/>
    <property type="match status" value="1"/>
</dbReference>
<dbReference type="Pfam" id="PF02684">
    <property type="entry name" value="LpxB"/>
    <property type="match status" value="1"/>
</dbReference>
<dbReference type="SUPFAM" id="SSF53756">
    <property type="entry name" value="UDP-Glycosyltransferase/glycogen phosphorylase"/>
    <property type="match status" value="1"/>
</dbReference>
<sequence length="383" mass="41563">MLYSPRLTDQILIVAGEASADLHAARTLHELQRLRPGITAFGVGGPRLREAGLEALAPAEDISVMGLAEVLPRIPRILGILRMLGRAAAERRPRAALLVDLPDFNLRLAARLKKLGIPVVYYVSPTIWAWRQGRAKKIARVVDRMLCILPFEERFYEGTGVSARFVGHPFAERPPPGPAEAYRSALGLPASRTTIAMVPGSRPSELKRLLPPMLQAAERLRAAHPDAQFVVPVAPTLDRAALEPYLAAHRTLEVRLVDGRTEEVVGASDAALVKSGTSTLEAGLMLRPMVVVYKLSWLSYAVARMLVKIAHVALVNILAGRGIVPELLQGDASPERMAAEVERLLGDRAAREAQIAALREVRASLGEPGAPLRVAEEVLGVMR</sequence>
<protein>
    <recommendedName>
        <fullName evidence="1">Lipid-A-disaccharide synthase</fullName>
        <ecNumber evidence="1">2.4.1.182</ecNumber>
    </recommendedName>
</protein>
<feature type="chain" id="PRO_1000191460" description="Lipid-A-disaccharide synthase">
    <location>
        <begin position="1"/>
        <end position="383"/>
    </location>
</feature>
<name>LPXB_ANAD2</name>
<keyword id="KW-0328">Glycosyltransferase</keyword>
<keyword id="KW-0441">Lipid A biosynthesis</keyword>
<keyword id="KW-0444">Lipid biosynthesis</keyword>
<keyword id="KW-0443">Lipid metabolism</keyword>
<keyword id="KW-0808">Transferase</keyword>
<gene>
    <name evidence="1" type="primary">lpxB</name>
    <name type="ordered locus">A2cp1_2806</name>
</gene>
<organism>
    <name type="scientific">Anaeromyxobacter dehalogenans (strain 2CP-1 / ATCC BAA-258)</name>
    <dbReference type="NCBI Taxonomy" id="455488"/>
    <lineage>
        <taxon>Bacteria</taxon>
        <taxon>Pseudomonadati</taxon>
        <taxon>Myxococcota</taxon>
        <taxon>Myxococcia</taxon>
        <taxon>Myxococcales</taxon>
        <taxon>Cystobacterineae</taxon>
        <taxon>Anaeromyxobacteraceae</taxon>
        <taxon>Anaeromyxobacter</taxon>
    </lineage>
</organism>
<comment type="function">
    <text evidence="1">Condensation of UDP-2,3-diacylglucosamine and 2,3-diacylglucosamine-1-phosphate to form lipid A disaccharide, a precursor of lipid A, a phosphorylated glycolipid that anchors the lipopolysaccharide to the outer membrane of the cell.</text>
</comment>
<comment type="catalytic activity">
    <reaction evidence="1">
        <text>a lipid X + a UDP-2-N,3-O-bis[(3R)-3-hydroxyacyl]-alpha-D-glucosamine = a lipid A disaccharide + UDP + H(+)</text>
        <dbReference type="Rhea" id="RHEA:67828"/>
        <dbReference type="ChEBI" id="CHEBI:15378"/>
        <dbReference type="ChEBI" id="CHEBI:58223"/>
        <dbReference type="ChEBI" id="CHEBI:137748"/>
        <dbReference type="ChEBI" id="CHEBI:176338"/>
        <dbReference type="ChEBI" id="CHEBI:176343"/>
        <dbReference type="EC" id="2.4.1.182"/>
    </reaction>
</comment>
<comment type="pathway">
    <text evidence="1">Bacterial outer membrane biogenesis; LPS lipid A biosynthesis.</text>
</comment>
<comment type="similarity">
    <text evidence="1">Belongs to the LpxB family.</text>
</comment>
<accession>B8JE78</accession>